<evidence type="ECO:0000250" key="1"/>
<evidence type="ECO:0000269" key="2">
    <source>
    </source>
</evidence>
<evidence type="ECO:0000269" key="3">
    <source>
    </source>
</evidence>
<evidence type="ECO:0000305" key="4"/>
<evidence type="ECO:0007829" key="5">
    <source>
        <dbReference type="PDB" id="1SBQ"/>
    </source>
</evidence>
<evidence type="ECO:0007829" key="6">
    <source>
        <dbReference type="PDB" id="1U3F"/>
    </source>
</evidence>
<evidence type="ECO:0007829" key="7">
    <source>
        <dbReference type="PDB" id="1U3G"/>
    </source>
</evidence>
<accession>P75430</accession>
<comment type="function">
    <text evidence="3">Involved in folate metabolism. Catalyzes the irreversible conversion of 5-formyltetrahydrofolate (5-FTHF) to yield 5,10-methenyltetrahydrofolate.</text>
</comment>
<comment type="catalytic activity">
    <reaction evidence="3">
        <text>(6S)-5-formyl-5,6,7,8-tetrahydrofolate + ATP = (6R)-5,10-methenyltetrahydrofolate + ADP + phosphate</text>
        <dbReference type="Rhea" id="RHEA:10488"/>
        <dbReference type="ChEBI" id="CHEBI:30616"/>
        <dbReference type="ChEBI" id="CHEBI:43474"/>
        <dbReference type="ChEBI" id="CHEBI:57455"/>
        <dbReference type="ChEBI" id="CHEBI:57457"/>
        <dbReference type="ChEBI" id="CHEBI:456216"/>
        <dbReference type="EC" id="6.3.3.2"/>
    </reaction>
</comment>
<comment type="cofactor">
    <cofactor evidence="3">
        <name>Mg(2+)</name>
        <dbReference type="ChEBI" id="CHEBI:18420"/>
    </cofactor>
    <cofactor evidence="3">
        <name>Mn(2+)</name>
        <dbReference type="ChEBI" id="CHEBI:29035"/>
    </cofactor>
    <cofactor evidence="3">
        <name>Ca(2+)</name>
        <dbReference type="ChEBI" id="CHEBI:29108"/>
    </cofactor>
    <cofactor evidence="3">
        <name>Zn(2+)</name>
        <dbReference type="ChEBI" id="CHEBI:29105"/>
    </cofactor>
    <cofactor evidence="3">
        <name>Fe(2+)</name>
        <dbReference type="ChEBI" id="CHEBI:29033"/>
    </cofactor>
    <cofactor evidence="3">
        <name>Co(2+)</name>
        <dbReference type="ChEBI" id="CHEBI:48828"/>
    </cofactor>
    <cofactor evidence="3">
        <name>Cu(2+)</name>
        <dbReference type="ChEBI" id="CHEBI:29036"/>
    </cofactor>
    <text evidence="3">Magnesium. It can also use divalent cations such as manganese, calcium, zinc, iron, cobalt and copper.</text>
</comment>
<comment type="biophysicochemical properties">
    <kinetics>
        <KM evidence="3">165 uM for 5-FTHF (at pH 6 and 37 degrees Celsius)</KM>
        <KM evidence="3">166 uM for ATP (at pH 6 and 37 degrees Celsius)</KM>
        <Vmax evidence="3">2.7 umol/min/mg enzyme toward 5-FTHF (at pH 6 and 37 degrees Celsius)</Vmax>
        <Vmax evidence="3">2.84 umol/min/mg enzyme toward ATP (at pH 6 and 37 degrees Celsius)</Vmax>
        <text>kcat is 0.94 sec(-1) for cyclo-ligase activity with 5-FTHF (at pH 6 and 37 degrees Celsius). kcat is 0.99 sec(-1) for cyclo-ligase activity with ATP (at pH 6 and 37 degrees Celsius).</text>
    </kinetics>
</comment>
<comment type="subunit">
    <text evidence="2 3">Monomer or homodimer.</text>
</comment>
<comment type="subcellular location">
    <subcellularLocation>
        <location evidence="1">Cytoplasm</location>
    </subcellularLocation>
</comment>
<comment type="similarity">
    <text evidence="4">Belongs to the 5-formyltetrahydrofolate cyclo-ligase family.</text>
</comment>
<organism>
    <name type="scientific">Mycoplasma pneumoniae (strain ATCC 29342 / M129 / Subtype 1)</name>
    <name type="common">Mycoplasmoides pneumoniae</name>
    <dbReference type="NCBI Taxonomy" id="272634"/>
    <lineage>
        <taxon>Bacteria</taxon>
        <taxon>Bacillati</taxon>
        <taxon>Mycoplasmatota</taxon>
        <taxon>Mycoplasmoidales</taxon>
        <taxon>Mycoplasmoidaceae</taxon>
        <taxon>Mycoplasmoides</taxon>
    </lineage>
</organism>
<gene>
    <name type="ordered locus">MPN_348</name>
    <name type="ORF">H91_orf164</name>
    <name type="ORF">MP488</name>
</gene>
<proteinExistence type="evidence at protein level"/>
<name>MTHFS_MYCPN</name>
<sequence>MDKNALRKQILQKRMALSTIEKSHLDQKINQKLVAFLTPKPCIKTIALYEPIKNEVTFVDFFFEFLKINQIRAVYPKVISDTEIIFIDQETNTFEPNQIDCFLIPLVGFNKDNYRLGFGKGYYDRYLMQLTRQQPKIGIAYSFQKGDFLADPWDVQLDLIINDE</sequence>
<protein>
    <recommendedName>
        <fullName>5-formyltetrahydrofolate cyclo-ligase</fullName>
        <ecNumber>6.3.3.2</ecNumber>
    </recommendedName>
    <alternativeName>
        <fullName>5,10-methenyl-tetrahydrofolate synthetase</fullName>
        <shortName>MTHFS</shortName>
        <shortName>Methenyl-THF synthetase</shortName>
    </alternativeName>
</protein>
<dbReference type="EC" id="6.3.3.2"/>
<dbReference type="EMBL" id="U00089">
    <property type="protein sequence ID" value="AAB96136.1"/>
    <property type="molecule type" value="Genomic_DNA"/>
</dbReference>
<dbReference type="PIR" id="S73814">
    <property type="entry name" value="S73814"/>
</dbReference>
<dbReference type="RefSeq" id="NP_110036.1">
    <property type="nucleotide sequence ID" value="NC_000912.1"/>
</dbReference>
<dbReference type="RefSeq" id="WP_010874704.1">
    <property type="nucleotide sequence ID" value="NZ_OU342337.1"/>
</dbReference>
<dbReference type="PDB" id="1SBQ">
    <property type="method" value="X-ray"/>
    <property type="resolution" value="2.20 A"/>
    <property type="chains" value="A/B=1-164"/>
</dbReference>
<dbReference type="PDB" id="1U3F">
    <property type="method" value="X-ray"/>
    <property type="resolution" value="2.50 A"/>
    <property type="chains" value="A/B=1-164"/>
</dbReference>
<dbReference type="PDB" id="1U3G">
    <property type="method" value="X-ray"/>
    <property type="resolution" value="2.50 A"/>
    <property type="chains" value="A=1-164"/>
</dbReference>
<dbReference type="PDBsum" id="1SBQ"/>
<dbReference type="PDBsum" id="1U3F"/>
<dbReference type="PDBsum" id="1U3G"/>
<dbReference type="SMR" id="P75430"/>
<dbReference type="STRING" id="272634.MPN_348"/>
<dbReference type="DrugBank" id="DB02800">
    <property type="generic name" value="5-hydroxymethyl-5,6-dihydrofolic acid"/>
</dbReference>
<dbReference type="EnsemblBacteria" id="AAB96136">
    <property type="protein sequence ID" value="AAB96136"/>
    <property type="gene ID" value="MPN_348"/>
</dbReference>
<dbReference type="KEGG" id="mpn:MPN_348"/>
<dbReference type="PATRIC" id="fig|272634.6.peg.375"/>
<dbReference type="HOGENOM" id="CLU_066245_3_0_14"/>
<dbReference type="OrthoDB" id="9801938at2"/>
<dbReference type="BioCyc" id="MPNE272634:G1GJ3-550-MONOMER"/>
<dbReference type="BRENDA" id="6.3.3.2">
    <property type="organism ID" value="3534"/>
</dbReference>
<dbReference type="SABIO-RK" id="P75430"/>
<dbReference type="EvolutionaryTrace" id="P75430"/>
<dbReference type="Proteomes" id="UP000000808">
    <property type="component" value="Chromosome"/>
</dbReference>
<dbReference type="GO" id="GO:0005737">
    <property type="term" value="C:cytoplasm"/>
    <property type="evidence" value="ECO:0007669"/>
    <property type="project" value="UniProtKB-SubCell"/>
</dbReference>
<dbReference type="GO" id="GO:0030272">
    <property type="term" value="F:5-formyltetrahydrofolate cyclo-ligase activity"/>
    <property type="evidence" value="ECO:0007669"/>
    <property type="project" value="UniProtKB-EC"/>
</dbReference>
<dbReference type="GO" id="GO:0005524">
    <property type="term" value="F:ATP binding"/>
    <property type="evidence" value="ECO:0007669"/>
    <property type="project" value="UniProtKB-KW"/>
</dbReference>
<dbReference type="GO" id="GO:0046872">
    <property type="term" value="F:metal ion binding"/>
    <property type="evidence" value="ECO:0007669"/>
    <property type="project" value="UniProtKB-KW"/>
</dbReference>
<dbReference type="GO" id="GO:0009396">
    <property type="term" value="P:folic acid-containing compound biosynthetic process"/>
    <property type="evidence" value="ECO:0007669"/>
    <property type="project" value="TreeGrafter"/>
</dbReference>
<dbReference type="GO" id="GO:0035999">
    <property type="term" value="P:tetrahydrofolate interconversion"/>
    <property type="evidence" value="ECO:0007669"/>
    <property type="project" value="TreeGrafter"/>
</dbReference>
<dbReference type="Gene3D" id="3.40.50.10420">
    <property type="entry name" value="NagB/RpiA/CoA transferase-like"/>
    <property type="match status" value="1"/>
</dbReference>
<dbReference type="InterPro" id="IPR002698">
    <property type="entry name" value="FTHF_cligase"/>
</dbReference>
<dbReference type="InterPro" id="IPR024185">
    <property type="entry name" value="FTHF_cligase-like_sf"/>
</dbReference>
<dbReference type="InterPro" id="IPR037171">
    <property type="entry name" value="NagB/RpiA_transferase-like"/>
</dbReference>
<dbReference type="NCBIfam" id="TIGR02727">
    <property type="entry name" value="MTHFS_bact"/>
    <property type="match status" value="1"/>
</dbReference>
<dbReference type="PANTHER" id="PTHR23407:SF1">
    <property type="entry name" value="5-FORMYLTETRAHYDROFOLATE CYCLO-LIGASE"/>
    <property type="match status" value="1"/>
</dbReference>
<dbReference type="PANTHER" id="PTHR23407">
    <property type="entry name" value="ATPASE INHIBITOR/5-FORMYLTETRAHYDROFOLATE CYCLO-LIGASE"/>
    <property type="match status" value="1"/>
</dbReference>
<dbReference type="Pfam" id="PF01812">
    <property type="entry name" value="5-FTHF_cyc-lig"/>
    <property type="match status" value="1"/>
</dbReference>
<dbReference type="PIRSF" id="PIRSF006806">
    <property type="entry name" value="FTHF_cligase"/>
    <property type="match status" value="1"/>
</dbReference>
<dbReference type="SUPFAM" id="SSF100950">
    <property type="entry name" value="NagB/RpiA/CoA transferase-like"/>
    <property type="match status" value="1"/>
</dbReference>
<feature type="chain" id="PRO_0000200288" description="5-formyltetrahydrofolate cyclo-ligase">
    <location>
        <begin position="1"/>
        <end position="164"/>
    </location>
</feature>
<feature type="binding site">
    <location>
        <begin position="3"/>
        <end position="7"/>
    </location>
    <ligand>
        <name>ATP</name>
        <dbReference type="ChEBI" id="CHEBI:30616"/>
    </ligand>
</feature>
<feature type="binding site" evidence="3">
    <location>
        <position position="50"/>
    </location>
    <ligand>
        <name>substrate</name>
    </ligand>
</feature>
<feature type="binding site" evidence="3">
    <location>
        <position position="55"/>
    </location>
    <ligand>
        <name>substrate</name>
    </ligand>
</feature>
<feature type="binding site" evidence="4">
    <location>
        <begin position="115"/>
        <end position="123"/>
    </location>
    <ligand>
        <name>ATP</name>
        <dbReference type="ChEBI" id="CHEBI:30616"/>
    </ligand>
</feature>
<feature type="binding site" evidence="3">
    <location>
        <position position="124"/>
    </location>
    <ligand>
        <name>Mg(2+)</name>
        <dbReference type="ChEBI" id="CHEBI:18420"/>
    </ligand>
</feature>
<feature type="binding site">
    <location>
        <position position="125"/>
    </location>
    <ligand>
        <name>ATP</name>
        <dbReference type="ChEBI" id="CHEBI:30616"/>
    </ligand>
</feature>
<feature type="binding site">
    <location>
        <position position="153"/>
    </location>
    <ligand>
        <name>ATP</name>
        <dbReference type="ChEBI" id="CHEBI:30616"/>
    </ligand>
</feature>
<feature type="binding site" evidence="3">
    <location>
        <position position="154"/>
    </location>
    <ligand>
        <name>Mg(2+)</name>
        <dbReference type="ChEBI" id="CHEBI:18420"/>
    </ligand>
</feature>
<feature type="helix" evidence="5">
    <location>
        <begin position="3"/>
        <end position="16"/>
    </location>
</feature>
<feature type="helix" evidence="5">
    <location>
        <begin position="19"/>
        <end position="37"/>
    </location>
</feature>
<feature type="strand" evidence="5">
    <location>
        <begin position="45"/>
        <end position="47"/>
    </location>
</feature>
<feature type="helix" evidence="5">
    <location>
        <begin position="60"/>
        <end position="68"/>
    </location>
</feature>
<feature type="strand" evidence="5">
    <location>
        <begin position="72"/>
        <end position="78"/>
    </location>
</feature>
<feature type="strand" evidence="5">
    <location>
        <begin position="80"/>
        <end position="82"/>
    </location>
</feature>
<feature type="strand" evidence="5">
    <location>
        <begin position="84"/>
        <end position="87"/>
    </location>
</feature>
<feature type="helix" evidence="5">
    <location>
        <begin position="96"/>
        <end position="98"/>
    </location>
</feature>
<feature type="strand" evidence="5">
    <location>
        <begin position="101"/>
        <end position="105"/>
    </location>
</feature>
<feature type="strand" evidence="5">
    <location>
        <begin position="107"/>
        <end position="109"/>
    </location>
</feature>
<feature type="strand" evidence="7">
    <location>
        <begin position="114"/>
        <end position="116"/>
    </location>
</feature>
<feature type="strand" evidence="6">
    <location>
        <begin position="118"/>
        <end position="120"/>
    </location>
</feature>
<feature type="helix" evidence="5">
    <location>
        <begin position="122"/>
        <end position="126"/>
    </location>
</feature>
<feature type="helix" evidence="5">
    <location>
        <begin position="127"/>
        <end position="129"/>
    </location>
</feature>
<feature type="strand" evidence="5">
    <location>
        <begin position="136"/>
        <end position="140"/>
    </location>
</feature>
<feature type="helix" evidence="5">
    <location>
        <begin position="142"/>
        <end position="144"/>
    </location>
</feature>
<feature type="strand" evidence="5">
    <location>
        <begin position="158"/>
        <end position="162"/>
    </location>
</feature>
<keyword id="KW-0002">3D-structure</keyword>
<keyword id="KW-0067">ATP-binding</keyword>
<keyword id="KW-0963">Cytoplasm</keyword>
<keyword id="KW-0436">Ligase</keyword>
<keyword id="KW-0460">Magnesium</keyword>
<keyword id="KW-0479">Metal-binding</keyword>
<keyword id="KW-0547">Nucleotide-binding</keyword>
<keyword id="KW-1185">Reference proteome</keyword>
<reference key="1">
    <citation type="journal article" date="1996" name="Nucleic Acids Res.">
        <title>Complete sequence analysis of the genome of the bacterium Mycoplasma pneumoniae.</title>
        <authorList>
            <person name="Himmelreich R."/>
            <person name="Hilbert H."/>
            <person name="Plagens H."/>
            <person name="Pirkl E."/>
            <person name="Li B.-C."/>
            <person name="Herrmann R."/>
        </authorList>
    </citation>
    <scope>NUCLEOTIDE SEQUENCE [LARGE SCALE GENOMIC DNA]</scope>
    <source>
        <strain>ATCC 29342 / M129 / Subtype 1</strain>
    </source>
</reference>
<reference key="2">
    <citation type="journal article" date="2004" name="Proteins">
        <title>Crystal structure of methenyltetrahydrofolate synthetase from Mycoplasma pneumoniae (GI: 13508087) at 2.2 A resolution.</title>
        <authorList>
            <person name="Chen S."/>
            <person name="Shin D.-H."/>
            <person name="Pufan R."/>
            <person name="Kim R."/>
            <person name="Kim S.H."/>
        </authorList>
    </citation>
    <scope>X-RAY CRYSTALLOGRAPHY (2.2 ANGSTROMS)</scope>
    <scope>SUBUNIT</scope>
</reference>
<reference key="3">
    <citation type="journal article" date="2005" name="Proteins">
        <title>Structural and functional characterization of a 5,10-methenyltetrahydrofolate synthetase from Mycoplasma pneumoniae (GI: 13508087).</title>
        <authorList>
            <person name="Chen S."/>
            <person name="Yakunin A.F."/>
            <person name="Proudfoot M."/>
            <person name="Kim R."/>
            <person name="Kim S.H."/>
        </authorList>
    </citation>
    <scope>X-RAY CRYSTALLOGRAPHY (2.3 ANGSTROMS) IN COMPLEX WITH SUBSTRATE; ADP AND MAGNESIUM</scope>
    <scope>FUNCTION</scope>
    <scope>CATALYTIC ACTIVITY</scope>
    <scope>BIOPHYSICOCHEMICAL PROPERTIES</scope>
    <scope>COFACTOR</scope>
    <scope>SUBUNIT</scope>
</reference>